<organism>
    <name type="scientific">Aquifex aeolicus (strain VF5)</name>
    <dbReference type="NCBI Taxonomy" id="224324"/>
    <lineage>
        <taxon>Bacteria</taxon>
        <taxon>Pseudomonadati</taxon>
        <taxon>Aquificota</taxon>
        <taxon>Aquificia</taxon>
        <taxon>Aquificales</taxon>
        <taxon>Aquificaceae</taxon>
        <taxon>Aquifex</taxon>
    </lineage>
</organism>
<comment type="function">
    <text evidence="1">Catalyzes the reversible adenylation of nicotinate mononucleotide (NaMN) to nicotinic acid adenine dinucleotide (NaAD).</text>
</comment>
<comment type="catalytic activity">
    <reaction>
        <text>nicotinate beta-D-ribonucleotide + ATP + H(+) = deamido-NAD(+) + diphosphate</text>
        <dbReference type="Rhea" id="RHEA:22860"/>
        <dbReference type="ChEBI" id="CHEBI:15378"/>
        <dbReference type="ChEBI" id="CHEBI:30616"/>
        <dbReference type="ChEBI" id="CHEBI:33019"/>
        <dbReference type="ChEBI" id="CHEBI:57502"/>
        <dbReference type="ChEBI" id="CHEBI:58437"/>
        <dbReference type="EC" id="2.7.7.18"/>
    </reaction>
</comment>
<comment type="pathway">
    <text>Cofactor biosynthesis; NAD(+) biosynthesis; deamido-NAD(+) from nicotinate D-ribonucleotide: step 1/1.</text>
</comment>
<comment type="similarity">
    <text evidence="2">Belongs to the NadD family.</text>
</comment>
<gene>
    <name type="primary">nadD</name>
    <name type="ordered locus">aq_036</name>
</gene>
<keyword id="KW-0067">ATP-binding</keyword>
<keyword id="KW-0520">NAD</keyword>
<keyword id="KW-0547">Nucleotide-binding</keyword>
<keyword id="KW-0548">Nucleotidyltransferase</keyword>
<keyword id="KW-0662">Pyridine nucleotide biosynthesis</keyword>
<keyword id="KW-1185">Reference proteome</keyword>
<keyword id="KW-0808">Transferase</keyword>
<evidence type="ECO:0000250" key="1"/>
<evidence type="ECO:0000305" key="2"/>
<proteinExistence type="inferred from homology"/>
<dbReference type="EC" id="2.7.7.18"/>
<dbReference type="EMBL" id="AE000657">
    <property type="protein sequence ID" value="AAC06417.1"/>
    <property type="molecule type" value="Genomic_DNA"/>
</dbReference>
<dbReference type="PIR" id="A70303">
    <property type="entry name" value="A70303"/>
</dbReference>
<dbReference type="RefSeq" id="NP_213012.1">
    <property type="nucleotide sequence ID" value="NC_000918.1"/>
</dbReference>
<dbReference type="RefSeq" id="WP_010879950.1">
    <property type="nucleotide sequence ID" value="NC_000918.1"/>
</dbReference>
<dbReference type="SMR" id="O66452"/>
<dbReference type="FunCoup" id="O66452">
    <property type="interactions" value="282"/>
</dbReference>
<dbReference type="STRING" id="224324.aq_036"/>
<dbReference type="EnsemblBacteria" id="AAC06417">
    <property type="protein sequence ID" value="AAC06417"/>
    <property type="gene ID" value="aq_036"/>
</dbReference>
<dbReference type="KEGG" id="aae:aq_036"/>
<dbReference type="PATRIC" id="fig|224324.8.peg.28"/>
<dbReference type="eggNOG" id="COG1057">
    <property type="taxonomic scope" value="Bacteria"/>
</dbReference>
<dbReference type="HOGENOM" id="CLU_069765_3_2_0"/>
<dbReference type="InParanoid" id="O66452"/>
<dbReference type="OrthoDB" id="5295945at2"/>
<dbReference type="UniPathway" id="UPA00253">
    <property type="reaction ID" value="UER00332"/>
</dbReference>
<dbReference type="Proteomes" id="UP000000798">
    <property type="component" value="Chromosome"/>
</dbReference>
<dbReference type="GO" id="GO:0005524">
    <property type="term" value="F:ATP binding"/>
    <property type="evidence" value="ECO:0007669"/>
    <property type="project" value="UniProtKB-KW"/>
</dbReference>
<dbReference type="GO" id="GO:0000309">
    <property type="term" value="F:nicotinamide-nucleotide adenylyltransferase activity"/>
    <property type="evidence" value="ECO:0000318"/>
    <property type="project" value="GO_Central"/>
</dbReference>
<dbReference type="GO" id="GO:0004515">
    <property type="term" value="F:nicotinate-nucleotide adenylyltransferase activity"/>
    <property type="evidence" value="ECO:0000318"/>
    <property type="project" value="GO_Central"/>
</dbReference>
<dbReference type="GO" id="GO:0009435">
    <property type="term" value="P:NAD biosynthetic process"/>
    <property type="evidence" value="ECO:0000318"/>
    <property type="project" value="GO_Central"/>
</dbReference>
<dbReference type="CDD" id="cd02165">
    <property type="entry name" value="NMNAT"/>
    <property type="match status" value="1"/>
</dbReference>
<dbReference type="FunFam" id="3.40.50.620:FF:000251">
    <property type="entry name" value="Probable nicotinate-nucleotide adenylyltransferase"/>
    <property type="match status" value="1"/>
</dbReference>
<dbReference type="Gene3D" id="3.40.50.620">
    <property type="entry name" value="HUPs"/>
    <property type="match status" value="1"/>
</dbReference>
<dbReference type="HAMAP" id="MF_00244">
    <property type="entry name" value="NaMN_adenylyltr"/>
    <property type="match status" value="1"/>
</dbReference>
<dbReference type="InterPro" id="IPR004821">
    <property type="entry name" value="Cyt_trans-like"/>
</dbReference>
<dbReference type="InterPro" id="IPR005248">
    <property type="entry name" value="NadD/NMNAT"/>
</dbReference>
<dbReference type="InterPro" id="IPR014729">
    <property type="entry name" value="Rossmann-like_a/b/a_fold"/>
</dbReference>
<dbReference type="NCBIfam" id="TIGR00125">
    <property type="entry name" value="cyt_tran_rel"/>
    <property type="match status" value="1"/>
</dbReference>
<dbReference type="NCBIfam" id="TIGR00482">
    <property type="entry name" value="nicotinate (nicotinamide) nucleotide adenylyltransferase"/>
    <property type="match status" value="1"/>
</dbReference>
<dbReference type="PANTHER" id="PTHR39321">
    <property type="entry name" value="NICOTINATE-NUCLEOTIDE ADENYLYLTRANSFERASE-RELATED"/>
    <property type="match status" value="1"/>
</dbReference>
<dbReference type="PANTHER" id="PTHR39321:SF3">
    <property type="entry name" value="PHOSPHOPANTETHEINE ADENYLYLTRANSFERASE"/>
    <property type="match status" value="1"/>
</dbReference>
<dbReference type="Pfam" id="PF01467">
    <property type="entry name" value="CTP_transf_like"/>
    <property type="match status" value="1"/>
</dbReference>
<dbReference type="SUPFAM" id="SSF52374">
    <property type="entry name" value="Nucleotidylyl transferase"/>
    <property type="match status" value="1"/>
</dbReference>
<accession>O66452</accession>
<name>NADD_AQUAE</name>
<feature type="chain" id="PRO_0000181378" description="Probable nicotinate-nucleotide adenylyltransferase">
    <location>
        <begin position="1"/>
        <end position="168"/>
    </location>
</feature>
<protein>
    <recommendedName>
        <fullName>Probable nicotinate-nucleotide adenylyltransferase</fullName>
        <ecNumber>2.7.7.18</ecNumber>
    </recommendedName>
    <alternativeName>
        <fullName>Deamido-NAD(+) diphosphorylase</fullName>
    </alternativeName>
    <alternativeName>
        <fullName>Deamido-NAD(+) pyrophosphorylase</fullName>
    </alternativeName>
    <alternativeName>
        <fullName>Nicotinate mononucleotide adenylyltransferase</fullName>
        <shortName>NaMN adenylyltransferase</shortName>
    </alternativeName>
</protein>
<reference key="1">
    <citation type="journal article" date="1998" name="Nature">
        <title>The complete genome of the hyperthermophilic bacterium Aquifex aeolicus.</title>
        <authorList>
            <person name="Deckert G."/>
            <person name="Warren P.V."/>
            <person name="Gaasterland T."/>
            <person name="Young W.G."/>
            <person name="Lenox A.L."/>
            <person name="Graham D.E."/>
            <person name="Overbeek R."/>
            <person name="Snead M.A."/>
            <person name="Keller M."/>
            <person name="Aujay M."/>
            <person name="Huber R."/>
            <person name="Feldman R.A."/>
            <person name="Short J.M."/>
            <person name="Olsen G.J."/>
            <person name="Swanson R.V."/>
        </authorList>
    </citation>
    <scope>NUCLEOTIDE SEQUENCE [LARGE SCALE GENOMIC DNA]</scope>
    <source>
        <strain>VF5</strain>
    </source>
</reference>
<sequence>MRIVFGGSFDPVHVGHIILARDVCEHFNAKEVIFVPTYQAPLKEKHKASAQDRLNMLKLALEREEKFTIEDYEIRRKGISYTVYTLKYLKEKYGGEELYLLLGSDSFLKFHKWKEPREILKLAKIIVVEREGMLEKVKEYIKEYFPELRKNEDIFFYKGRRIDISSTE</sequence>